<evidence type="ECO:0000250" key="1">
    <source>
        <dbReference type="UniProtKB" id="P69681"/>
    </source>
</evidence>
<evidence type="ECO:0000305" key="2"/>
<evidence type="ECO:0007829" key="3">
    <source>
        <dbReference type="PDB" id="4NH2"/>
    </source>
</evidence>
<sequence length="428" mass="44515">MKIATIKTGLASLAMLPGLVMAAPAVADKADNAFMMICTALVLFMTIPGIALFYGGLIRGKNVLSMLTQVTVTFALVCILWVVYGYSLAFGEGNNFFGNINWLMLKNIELTAVMGSIYQYIHVAFQGSFACITVGLIVGALAERIRFSAVLIFVVVWLTLSYIPIAHMVWGGGLLASHGALDFAGGTVVHINAAIAGLVGAYLIGKRVGFGKEAFKPHNLPMVFTGTAILYIGWFGFNAGSAGTANEIAALAFVNTVVATAAAILGWIFGEWALRGKPSLLGACSGAIAGLVGVTPACGYIGVGGALIIGVVAGLAGLWGVTMLKRLLRVDDPCDVFGVHGVCGIVGCIMTGIFAASSLGGVGFAEGVTMGHQLLVQLESIAITIVWSGVVAFIGYKLADLTVGLRVPEEQEREGLDVNSHGENAYNA</sequence>
<reference key="1">
    <citation type="journal article" date="2001" name="Nature">
        <title>Genome sequence of enterohaemorrhagic Escherichia coli O157:H7.</title>
        <authorList>
            <person name="Perna N.T."/>
            <person name="Plunkett G. III"/>
            <person name="Burland V."/>
            <person name="Mau B."/>
            <person name="Glasner J.D."/>
            <person name="Rose D.J."/>
            <person name="Mayhew G.F."/>
            <person name="Evans P.S."/>
            <person name="Gregor J."/>
            <person name="Kirkpatrick H.A."/>
            <person name="Posfai G."/>
            <person name="Hackett J."/>
            <person name="Klink S."/>
            <person name="Boutin A."/>
            <person name="Shao Y."/>
            <person name="Miller L."/>
            <person name="Grotbeck E.J."/>
            <person name="Davis N.W."/>
            <person name="Lim A."/>
            <person name="Dimalanta E.T."/>
            <person name="Potamousis K."/>
            <person name="Apodaca J."/>
            <person name="Anantharaman T.S."/>
            <person name="Lin J."/>
            <person name="Yen G."/>
            <person name="Schwartz D.C."/>
            <person name="Welch R.A."/>
            <person name="Blattner F.R."/>
        </authorList>
    </citation>
    <scope>NUCLEOTIDE SEQUENCE [LARGE SCALE GENOMIC DNA]</scope>
    <source>
        <strain>O157:H7 / EDL933 / ATCC 700927 / EHEC</strain>
    </source>
</reference>
<reference key="2">
    <citation type="journal article" date="2001" name="DNA Res.">
        <title>Complete genome sequence of enterohemorrhagic Escherichia coli O157:H7 and genomic comparison with a laboratory strain K-12.</title>
        <authorList>
            <person name="Hayashi T."/>
            <person name="Makino K."/>
            <person name="Ohnishi M."/>
            <person name="Kurokawa K."/>
            <person name="Ishii K."/>
            <person name="Yokoyama K."/>
            <person name="Han C.-G."/>
            <person name="Ohtsubo E."/>
            <person name="Nakayama K."/>
            <person name="Murata T."/>
            <person name="Tanaka M."/>
            <person name="Tobe T."/>
            <person name="Iida T."/>
            <person name="Takami H."/>
            <person name="Honda T."/>
            <person name="Sasakawa C."/>
            <person name="Ogasawara N."/>
            <person name="Yasunaga T."/>
            <person name="Kuhara S."/>
            <person name="Shiba T."/>
            <person name="Hattori M."/>
            <person name="Shinagawa H."/>
        </authorList>
    </citation>
    <scope>NUCLEOTIDE SEQUENCE [LARGE SCALE GENOMIC DNA]</scope>
    <source>
        <strain>O157:H7 / Sakai / RIMD 0509952 / EHEC</strain>
    </source>
</reference>
<keyword id="KW-0002">3D-structure</keyword>
<keyword id="KW-0924">Ammonia transport</keyword>
<keyword id="KW-0997">Cell inner membrane</keyword>
<keyword id="KW-1003">Cell membrane</keyword>
<keyword id="KW-0472">Membrane</keyword>
<keyword id="KW-1185">Reference proteome</keyword>
<keyword id="KW-0732">Signal</keyword>
<keyword id="KW-0812">Transmembrane</keyword>
<keyword id="KW-1133">Transmembrane helix</keyword>
<keyword id="KW-0813">Transport</keyword>
<organism>
    <name type="scientific">Escherichia coli O157:H7</name>
    <dbReference type="NCBI Taxonomy" id="83334"/>
    <lineage>
        <taxon>Bacteria</taxon>
        <taxon>Pseudomonadati</taxon>
        <taxon>Pseudomonadota</taxon>
        <taxon>Gammaproteobacteria</taxon>
        <taxon>Enterobacterales</taxon>
        <taxon>Enterobacteriaceae</taxon>
        <taxon>Escherichia</taxon>
    </lineage>
</organism>
<gene>
    <name type="primary">amtB</name>
    <name type="ordered locus">Z0563</name>
    <name type="ordered locus">ECs0505</name>
</gene>
<feature type="signal peptide" evidence="1">
    <location>
        <begin position="1"/>
        <end position="22"/>
    </location>
</feature>
<feature type="chain" id="PRO_0000001308" description="Ammonium transporter AmtB">
    <location>
        <begin position="23"/>
        <end position="428"/>
    </location>
</feature>
<feature type="topological domain" description="Periplasmic" evidence="1">
    <location>
        <begin position="23"/>
        <end position="32"/>
    </location>
</feature>
<feature type="transmembrane region" description="Helical" evidence="1">
    <location>
        <begin position="33"/>
        <end position="54"/>
    </location>
</feature>
<feature type="topological domain" description="Cytoplasmic" evidence="1">
    <location>
        <begin position="55"/>
        <end position="65"/>
    </location>
</feature>
<feature type="transmembrane region" description="Helical" evidence="1">
    <location>
        <begin position="66"/>
        <end position="90"/>
    </location>
</feature>
<feature type="topological domain" description="Periplasmic" evidence="1">
    <location>
        <begin position="91"/>
        <end position="119"/>
    </location>
</feature>
<feature type="transmembrane region" description="Helical" evidence="1">
    <location>
        <begin position="120"/>
        <end position="142"/>
    </location>
</feature>
<feature type="topological domain" description="Cytoplasmic" evidence="1">
    <location>
        <begin position="143"/>
        <end position="146"/>
    </location>
</feature>
<feature type="transmembrane region" description="Helical" evidence="1">
    <location>
        <begin position="147"/>
        <end position="171"/>
    </location>
</feature>
<feature type="topological domain" description="Periplasmic" evidence="1">
    <location>
        <begin position="172"/>
        <end position="185"/>
    </location>
</feature>
<feature type="transmembrane region" description="Helical" evidence="1">
    <location>
        <begin position="186"/>
        <end position="201"/>
    </location>
</feature>
<feature type="topological domain" description="Cytoplasmic" evidence="1">
    <location>
        <begin position="202"/>
        <end position="221"/>
    </location>
</feature>
<feature type="transmembrane region" description="Helical" evidence="1">
    <location>
        <begin position="222"/>
        <end position="241"/>
    </location>
</feature>
<feature type="topological domain" description="Periplasmic" evidence="1">
    <location>
        <begin position="242"/>
        <end position="248"/>
    </location>
</feature>
<feature type="transmembrane region" description="Helical" evidence="1">
    <location>
        <begin position="249"/>
        <end position="273"/>
    </location>
</feature>
<feature type="topological domain" description="Cytoplasmic" evidence="1">
    <location>
        <begin position="274"/>
        <end position="279"/>
    </location>
</feature>
<feature type="transmembrane region" description="Helical" evidence="1">
    <location>
        <begin position="280"/>
        <end position="300"/>
    </location>
</feature>
<feature type="topological domain" description="Periplasmic" evidence="1">
    <location>
        <begin position="301"/>
        <end position="302"/>
    </location>
</feature>
<feature type="transmembrane region" description="Helical" evidence="1">
    <location>
        <begin position="303"/>
        <end position="321"/>
    </location>
</feature>
<feature type="topological domain" description="Cytoplasmic" evidence="1">
    <location>
        <begin position="322"/>
        <end position="333"/>
    </location>
</feature>
<feature type="transmembrane region" description="Helical" evidence="1">
    <location>
        <begin position="334"/>
        <end position="355"/>
    </location>
</feature>
<feature type="topological domain" description="Periplasmic" evidence="1">
    <location>
        <begin position="356"/>
        <end position="370"/>
    </location>
</feature>
<feature type="transmembrane region" description="Helical" evidence="1">
    <location>
        <begin position="371"/>
        <end position="399"/>
    </location>
</feature>
<feature type="topological domain" description="Cytoplasmic" evidence="1">
    <location>
        <begin position="400"/>
        <end position="428"/>
    </location>
</feature>
<feature type="binding site" evidence="1">
    <location>
        <position position="241"/>
    </location>
    <ligand>
        <name>NH4(+)</name>
        <dbReference type="ChEBI" id="CHEBI:28938"/>
    </ligand>
</feature>
<feature type="site" description="Important for the deprotonation of the ammonium cation" evidence="1">
    <location>
        <position position="182"/>
    </location>
</feature>
<feature type="site" description="Twin-His motif. Important for optimum substrate conductance" evidence="1">
    <location>
        <position position="190"/>
    </location>
</feature>
<feature type="site" description="Important for optimum substrate conductance" evidence="1">
    <location>
        <position position="237"/>
    </location>
</feature>
<feature type="site" description="Twin-His motif. Important for optimum substrate conductance" evidence="1">
    <location>
        <position position="340"/>
    </location>
</feature>
<feature type="helix" evidence="3">
    <location>
        <begin position="29"/>
        <end position="46"/>
    </location>
</feature>
<feature type="helix" evidence="3">
    <location>
        <begin position="49"/>
        <end position="55"/>
    </location>
</feature>
<feature type="helix" evidence="3">
    <location>
        <begin position="60"/>
        <end position="62"/>
    </location>
</feature>
<feature type="helix" evidence="3">
    <location>
        <begin position="63"/>
        <end position="83"/>
    </location>
</feature>
<feature type="helix" evidence="3">
    <location>
        <begin position="85"/>
        <end position="90"/>
    </location>
</feature>
<feature type="strand" evidence="3">
    <location>
        <begin position="94"/>
        <end position="96"/>
    </location>
</feature>
<feature type="strand" evidence="3">
    <location>
        <begin position="101"/>
        <end position="103"/>
    </location>
</feature>
<feature type="turn" evidence="3">
    <location>
        <begin position="104"/>
        <end position="107"/>
    </location>
</feature>
<feature type="helix" evidence="3">
    <location>
        <begin position="119"/>
        <end position="141"/>
    </location>
</feature>
<feature type="helix" evidence="3">
    <location>
        <begin position="147"/>
        <end position="160"/>
    </location>
</feature>
<feature type="helix" evidence="3">
    <location>
        <begin position="162"/>
        <end position="170"/>
    </location>
</feature>
<feature type="strand" evidence="3">
    <location>
        <begin position="171"/>
        <end position="173"/>
    </location>
</feature>
<feature type="helix" evidence="3">
    <location>
        <begin position="174"/>
        <end position="177"/>
    </location>
</feature>
<feature type="turn" evidence="3">
    <location>
        <begin position="186"/>
        <end position="189"/>
    </location>
</feature>
<feature type="helix" evidence="3">
    <location>
        <begin position="190"/>
        <end position="202"/>
    </location>
</feature>
<feature type="helix" evidence="3">
    <location>
        <begin position="220"/>
        <end position="239"/>
    </location>
</feature>
<feature type="helix" evidence="3">
    <location>
        <begin position="240"/>
        <end position="242"/>
    </location>
</feature>
<feature type="strand" evidence="3">
    <location>
        <begin position="243"/>
        <end position="246"/>
    </location>
</feature>
<feature type="helix" evidence="3">
    <location>
        <begin position="247"/>
        <end position="275"/>
    </location>
</feature>
<feature type="helix" evidence="3">
    <location>
        <begin position="280"/>
        <end position="294"/>
    </location>
</feature>
<feature type="turn" evidence="3">
    <location>
        <begin position="295"/>
        <end position="300"/>
    </location>
</feature>
<feature type="helix" evidence="3">
    <location>
        <begin position="303"/>
        <end position="322"/>
    </location>
</feature>
<feature type="helix" evidence="3">
    <location>
        <begin position="335"/>
        <end position="354"/>
    </location>
</feature>
<feature type="helix" evidence="3">
    <location>
        <begin position="357"/>
        <end position="359"/>
    </location>
</feature>
<feature type="helix" evidence="3">
    <location>
        <begin position="370"/>
        <end position="402"/>
    </location>
</feature>
<proteinExistence type="evidence at protein level"/>
<dbReference type="EMBL" id="AE005174">
    <property type="protein sequence ID" value="AAG54801.1"/>
    <property type="molecule type" value="Genomic_DNA"/>
</dbReference>
<dbReference type="EMBL" id="BA000007">
    <property type="protein sequence ID" value="BAB33928.1"/>
    <property type="molecule type" value="Genomic_DNA"/>
</dbReference>
<dbReference type="PIR" id="C64775">
    <property type="entry name" value="C64775"/>
</dbReference>
<dbReference type="PIR" id="E85542">
    <property type="entry name" value="E85542"/>
</dbReference>
<dbReference type="RefSeq" id="NP_308532.1">
    <property type="nucleotide sequence ID" value="NC_002695.1"/>
</dbReference>
<dbReference type="RefSeq" id="WP_000685029.1">
    <property type="nucleotide sequence ID" value="NZ_VOAI01000005.1"/>
</dbReference>
<dbReference type="PDB" id="4NH2">
    <property type="method" value="X-ray"/>
    <property type="resolution" value="2.30 A"/>
    <property type="chains" value="A/B/C/D/E/F=26-428"/>
</dbReference>
<dbReference type="PDBsum" id="4NH2"/>
<dbReference type="SMR" id="P69680"/>
<dbReference type="STRING" id="155864.Z0563"/>
<dbReference type="GeneID" id="914608"/>
<dbReference type="GeneID" id="93776999"/>
<dbReference type="KEGG" id="ece:Z0563"/>
<dbReference type="KEGG" id="ecs:ECs_0505"/>
<dbReference type="PATRIC" id="fig|386585.9.peg.610"/>
<dbReference type="eggNOG" id="COG0004">
    <property type="taxonomic scope" value="Bacteria"/>
</dbReference>
<dbReference type="HOGENOM" id="CLU_000445_33_0_6"/>
<dbReference type="OMA" id="FNAGSWL"/>
<dbReference type="Proteomes" id="UP000000558">
    <property type="component" value="Chromosome"/>
</dbReference>
<dbReference type="Proteomes" id="UP000002519">
    <property type="component" value="Chromosome"/>
</dbReference>
<dbReference type="GO" id="GO:0005886">
    <property type="term" value="C:plasma membrane"/>
    <property type="evidence" value="ECO:0007669"/>
    <property type="project" value="UniProtKB-SubCell"/>
</dbReference>
<dbReference type="GO" id="GO:0008519">
    <property type="term" value="F:ammonium channel activity"/>
    <property type="evidence" value="ECO:0007669"/>
    <property type="project" value="InterPro"/>
</dbReference>
<dbReference type="FunFam" id="1.10.3430.10:FF:000004">
    <property type="entry name" value="Ammonium transporter"/>
    <property type="match status" value="1"/>
</dbReference>
<dbReference type="Gene3D" id="1.10.3430.10">
    <property type="entry name" value="Ammonium transporter AmtB like domains"/>
    <property type="match status" value="1"/>
</dbReference>
<dbReference type="InterPro" id="IPR029020">
    <property type="entry name" value="Ammonium/urea_transptr"/>
</dbReference>
<dbReference type="InterPro" id="IPR001905">
    <property type="entry name" value="Ammonium_transpt"/>
</dbReference>
<dbReference type="InterPro" id="IPR018047">
    <property type="entry name" value="Ammonium_transpt_CS"/>
</dbReference>
<dbReference type="InterPro" id="IPR024041">
    <property type="entry name" value="NH4_transpt_AmtB-like_dom"/>
</dbReference>
<dbReference type="NCBIfam" id="TIGR00836">
    <property type="entry name" value="amt"/>
    <property type="match status" value="1"/>
</dbReference>
<dbReference type="NCBIfam" id="NF007947">
    <property type="entry name" value="PRK10666.1"/>
    <property type="match status" value="1"/>
</dbReference>
<dbReference type="PANTHER" id="PTHR43029">
    <property type="entry name" value="AMMONIUM TRANSPORTER MEP2"/>
    <property type="match status" value="1"/>
</dbReference>
<dbReference type="PANTHER" id="PTHR43029:SF10">
    <property type="entry name" value="AMMONIUM TRANSPORTER MEP2"/>
    <property type="match status" value="1"/>
</dbReference>
<dbReference type="Pfam" id="PF00909">
    <property type="entry name" value="Ammonium_transp"/>
    <property type="match status" value="1"/>
</dbReference>
<dbReference type="SUPFAM" id="SSF111352">
    <property type="entry name" value="Ammonium transporter"/>
    <property type="match status" value="1"/>
</dbReference>
<dbReference type="PROSITE" id="PS01219">
    <property type="entry name" value="AMMONIUM_TRANSP"/>
    <property type="match status" value="1"/>
</dbReference>
<comment type="function">
    <text evidence="1">Involved in the uptake of ammonium/ammonia (NH(4)(+)/NH(3)). Transport is electrogenic. Following sequestration of NH(4)(+) at the periplasmic face, NH(4)(+) is deprotonated and neutral NH(3) is transported into the cytoplasm. Neutral NH(3) and charged H(+) are carried separately across the membrane on a unique two-lane pathway, before recombining to NH(4)(+) inside the cell.</text>
</comment>
<comment type="activity regulation">
    <text evidence="1">In the presence of high extracellular ammonium concentrations, transport activity is inhibited by interaction with the regulatory protein GlnK. Formation of the GlnK-AmtB complex is influenced by intracellular pools of the effector molecules ATP, ADP, Mg(2+) and 2-oxoglutarate. The GlnK-AmtB interaction is also controlled by the level of intracellular glutamine and the uridylylation status of GlnK.</text>
</comment>
<comment type="subunit">
    <text evidence="1">Homotrimer (By similarity). In response to elevation of the extracellular ammonium concentration, interacts and forms a complex with GlnK (By similarity).</text>
</comment>
<comment type="subcellular location">
    <subcellularLocation>
        <location evidence="1">Cell inner membrane</location>
        <topology evidence="1">Multi-pass membrane protein</topology>
    </subcellularLocation>
</comment>
<comment type="similarity">
    <text evidence="2">Belongs to the ammonia transporter channel (TC 1.A.11.2) family.</text>
</comment>
<accession>P69680</accession>
<accession>P37905</accession>
<name>AMTB_ECO57</name>
<protein>
    <recommendedName>
        <fullName evidence="1">Ammonium transporter AmtB</fullName>
    </recommendedName>
    <alternativeName>
        <fullName evidence="1">Ammonia channel AmtB</fullName>
    </alternativeName>
    <alternativeName>
        <fullName evidence="1">Ammonium channel AmtB</fullName>
    </alternativeName>
</protein>